<organism>
    <name type="scientific">Shewanella baltica (strain OS155 / ATCC BAA-1091)</name>
    <dbReference type="NCBI Taxonomy" id="325240"/>
    <lineage>
        <taxon>Bacteria</taxon>
        <taxon>Pseudomonadati</taxon>
        <taxon>Pseudomonadota</taxon>
        <taxon>Gammaproteobacteria</taxon>
        <taxon>Alteromonadales</taxon>
        <taxon>Shewanellaceae</taxon>
        <taxon>Shewanella</taxon>
    </lineage>
</organism>
<dbReference type="EC" id="2.1.1.170" evidence="1"/>
<dbReference type="EMBL" id="CP000563">
    <property type="protein sequence ID" value="ABN63837.1"/>
    <property type="molecule type" value="Genomic_DNA"/>
</dbReference>
<dbReference type="RefSeq" id="WP_006083835.1">
    <property type="nucleotide sequence ID" value="NC_009052.1"/>
</dbReference>
<dbReference type="SMR" id="A3DAS4"/>
<dbReference type="STRING" id="325240.Sbal_4376"/>
<dbReference type="GeneID" id="11774470"/>
<dbReference type="KEGG" id="sbl:Sbal_4376"/>
<dbReference type="HOGENOM" id="CLU_065341_2_0_6"/>
<dbReference type="OrthoDB" id="9808773at2"/>
<dbReference type="Proteomes" id="UP000001557">
    <property type="component" value="Chromosome"/>
</dbReference>
<dbReference type="GO" id="GO:0005829">
    <property type="term" value="C:cytosol"/>
    <property type="evidence" value="ECO:0007669"/>
    <property type="project" value="TreeGrafter"/>
</dbReference>
<dbReference type="GO" id="GO:0070043">
    <property type="term" value="F:rRNA (guanine-N7-)-methyltransferase activity"/>
    <property type="evidence" value="ECO:0007669"/>
    <property type="project" value="UniProtKB-UniRule"/>
</dbReference>
<dbReference type="CDD" id="cd02440">
    <property type="entry name" value="AdoMet_MTases"/>
    <property type="match status" value="1"/>
</dbReference>
<dbReference type="FunFam" id="3.40.50.150:FF:000032">
    <property type="entry name" value="Ribosomal RNA small subunit methyltransferase G"/>
    <property type="match status" value="1"/>
</dbReference>
<dbReference type="Gene3D" id="3.40.50.150">
    <property type="entry name" value="Vaccinia Virus protein VP39"/>
    <property type="match status" value="1"/>
</dbReference>
<dbReference type="HAMAP" id="MF_00074">
    <property type="entry name" value="16SrRNA_methyltr_G"/>
    <property type="match status" value="1"/>
</dbReference>
<dbReference type="InterPro" id="IPR003682">
    <property type="entry name" value="rRNA_ssu_MeTfrase_G"/>
</dbReference>
<dbReference type="InterPro" id="IPR029063">
    <property type="entry name" value="SAM-dependent_MTases_sf"/>
</dbReference>
<dbReference type="NCBIfam" id="TIGR00138">
    <property type="entry name" value="rsmG_gidB"/>
    <property type="match status" value="1"/>
</dbReference>
<dbReference type="PANTHER" id="PTHR31760">
    <property type="entry name" value="S-ADENOSYL-L-METHIONINE-DEPENDENT METHYLTRANSFERASES SUPERFAMILY PROTEIN"/>
    <property type="match status" value="1"/>
</dbReference>
<dbReference type="PANTHER" id="PTHR31760:SF0">
    <property type="entry name" value="S-ADENOSYL-L-METHIONINE-DEPENDENT METHYLTRANSFERASES SUPERFAMILY PROTEIN"/>
    <property type="match status" value="1"/>
</dbReference>
<dbReference type="Pfam" id="PF02527">
    <property type="entry name" value="GidB"/>
    <property type="match status" value="1"/>
</dbReference>
<dbReference type="PIRSF" id="PIRSF003078">
    <property type="entry name" value="GidB"/>
    <property type="match status" value="1"/>
</dbReference>
<dbReference type="SUPFAM" id="SSF53335">
    <property type="entry name" value="S-adenosyl-L-methionine-dependent methyltransferases"/>
    <property type="match status" value="1"/>
</dbReference>
<evidence type="ECO:0000255" key="1">
    <source>
        <dbReference type="HAMAP-Rule" id="MF_00074"/>
    </source>
</evidence>
<feature type="chain" id="PRO_1000010199" description="Ribosomal RNA small subunit methyltransferase G">
    <location>
        <begin position="1"/>
        <end position="206"/>
    </location>
</feature>
<feature type="binding site" evidence="1">
    <location>
        <position position="74"/>
    </location>
    <ligand>
        <name>S-adenosyl-L-methionine</name>
        <dbReference type="ChEBI" id="CHEBI:59789"/>
    </ligand>
</feature>
<feature type="binding site" evidence="1">
    <location>
        <position position="79"/>
    </location>
    <ligand>
        <name>S-adenosyl-L-methionine</name>
        <dbReference type="ChEBI" id="CHEBI:59789"/>
    </ligand>
</feature>
<feature type="binding site" evidence="1">
    <location>
        <begin position="125"/>
        <end position="126"/>
    </location>
    <ligand>
        <name>S-adenosyl-L-methionine</name>
        <dbReference type="ChEBI" id="CHEBI:59789"/>
    </ligand>
</feature>
<feature type="binding site" evidence="1">
    <location>
        <position position="140"/>
    </location>
    <ligand>
        <name>S-adenosyl-L-methionine</name>
        <dbReference type="ChEBI" id="CHEBI:59789"/>
    </ligand>
</feature>
<reference key="1">
    <citation type="submission" date="2007-02" db="EMBL/GenBank/DDBJ databases">
        <title>Complete sequence of chromosome of Shewanella baltica OS155.</title>
        <authorList>
            <consortium name="US DOE Joint Genome Institute"/>
            <person name="Copeland A."/>
            <person name="Lucas S."/>
            <person name="Lapidus A."/>
            <person name="Barry K."/>
            <person name="Detter J.C."/>
            <person name="Glavina del Rio T."/>
            <person name="Hammon N."/>
            <person name="Israni S."/>
            <person name="Dalin E."/>
            <person name="Tice H."/>
            <person name="Pitluck S."/>
            <person name="Sims D.R."/>
            <person name="Brettin T."/>
            <person name="Bruce D."/>
            <person name="Han C."/>
            <person name="Tapia R."/>
            <person name="Brainard J."/>
            <person name="Schmutz J."/>
            <person name="Larimer F."/>
            <person name="Land M."/>
            <person name="Hauser L."/>
            <person name="Kyrpides N."/>
            <person name="Mikhailova N."/>
            <person name="Brettar I."/>
            <person name="Klappenbach J."/>
            <person name="Konstantinidis K."/>
            <person name="Rodrigues J."/>
            <person name="Tiedje J."/>
            <person name="Richardson P."/>
        </authorList>
    </citation>
    <scope>NUCLEOTIDE SEQUENCE [LARGE SCALE GENOMIC DNA]</scope>
    <source>
        <strain>OS155 / ATCC BAA-1091</strain>
    </source>
</reference>
<gene>
    <name evidence="1" type="primary">rsmG</name>
    <name type="ordered locus">Sbal_4376</name>
</gene>
<proteinExistence type="inferred from homology"/>
<accession>A3DAS4</accession>
<keyword id="KW-0963">Cytoplasm</keyword>
<keyword id="KW-0489">Methyltransferase</keyword>
<keyword id="KW-1185">Reference proteome</keyword>
<keyword id="KW-0698">rRNA processing</keyword>
<keyword id="KW-0949">S-adenosyl-L-methionine</keyword>
<keyword id="KW-0808">Transferase</keyword>
<name>RSMG_SHEB5</name>
<comment type="function">
    <text evidence="1">Specifically methylates the N7 position of guanine in position 527 of 16S rRNA.</text>
</comment>
<comment type="catalytic activity">
    <reaction evidence="1">
        <text>guanosine(527) in 16S rRNA + S-adenosyl-L-methionine = N(7)-methylguanosine(527) in 16S rRNA + S-adenosyl-L-homocysteine</text>
        <dbReference type="Rhea" id="RHEA:42732"/>
        <dbReference type="Rhea" id="RHEA-COMP:10209"/>
        <dbReference type="Rhea" id="RHEA-COMP:10210"/>
        <dbReference type="ChEBI" id="CHEBI:57856"/>
        <dbReference type="ChEBI" id="CHEBI:59789"/>
        <dbReference type="ChEBI" id="CHEBI:74269"/>
        <dbReference type="ChEBI" id="CHEBI:74480"/>
        <dbReference type="EC" id="2.1.1.170"/>
    </reaction>
</comment>
<comment type="subcellular location">
    <subcellularLocation>
        <location evidence="1">Cytoplasm</location>
    </subcellularLocation>
</comment>
<comment type="similarity">
    <text evidence="1">Belongs to the methyltransferase superfamily. RNA methyltransferase RsmG family.</text>
</comment>
<protein>
    <recommendedName>
        <fullName evidence="1">Ribosomal RNA small subunit methyltransferase G</fullName>
        <ecNumber evidence="1">2.1.1.170</ecNumber>
    </recommendedName>
    <alternativeName>
        <fullName evidence="1">16S rRNA 7-methylguanosine methyltransferase</fullName>
        <shortName evidence="1">16S rRNA m7G methyltransferase</shortName>
    </alternativeName>
</protein>
<sequence>MLSAQLEAYLAEINLPATAEQKKQLIDFVGMLNKWNKAYNLTSVRDPEAMLIRHIMDSLVVSKHLQGERFIDVGTGPGLPGIPLAIMNPDKQFVLLDSLGKRIRFQKQVSFELGIHNISSVESRVEAYQPEQKFDGVLSRAFASIQDMLTWCHHLPAEHGQFYALKGQLNDEEMQHIPSGFAVKEVIELKVPKLDEQRHLLKIIKE</sequence>